<evidence type="ECO:0000255" key="1">
    <source>
        <dbReference type="PROSITE-ProRule" id="PRU00037"/>
    </source>
</evidence>
<evidence type="ECO:0000303" key="2">
    <source>
    </source>
</evidence>
<evidence type="ECO:0000305" key="3"/>
<proteinExistence type="evidence at protein level"/>
<keyword id="KW-0025">Alternative splicing</keyword>
<keyword id="KW-0880">Kelch repeat</keyword>
<keyword id="KW-1267">Proteomics identification</keyword>
<keyword id="KW-1185">Reference proteome</keyword>
<keyword id="KW-0677">Repeat</keyword>
<comment type="interaction">
    <interactant intactId="EBI-6426390">
        <id>Q96NJ5</id>
    </interactant>
    <interactant intactId="EBI-6398041">
        <id>Q9UMF0</id>
        <label>ICAM5</label>
    </interactant>
    <organismsDiffer>false</organismsDiffer>
    <experiments>3</experiments>
</comment>
<comment type="interaction">
    <interactant intactId="EBI-6426390">
        <id>Q96NJ5</id>
    </interactant>
    <interactant intactId="EBI-948266">
        <id>O14901</id>
        <label>KLF11</label>
    </interactant>
    <organismsDiffer>false</organismsDiffer>
    <experiments>3</experiments>
</comment>
<comment type="interaction">
    <interactant intactId="EBI-6426390">
        <id>Q96NJ5</id>
    </interactant>
    <interactant intactId="EBI-73995">
        <id>P27361</id>
        <label>MAPK3</label>
    </interactant>
    <organismsDiffer>false</organismsDiffer>
    <experiments>3</experiments>
</comment>
<comment type="interaction">
    <interactant intactId="EBI-6426390">
        <id>Q96NJ5</id>
    </interactant>
    <interactant intactId="EBI-372899">
        <id>Q13148</id>
        <label>TARDBP</label>
    </interactant>
    <organismsDiffer>false</organismsDiffer>
    <experiments>3</experiments>
</comment>
<comment type="alternative products">
    <event type="alternative splicing"/>
    <isoform>
        <id>Q96NJ5-1</id>
        <name>1</name>
        <sequence type="displayed"/>
    </isoform>
    <isoform>
        <id>Q96NJ5-2</id>
        <name>2</name>
        <sequence type="described" ref="VSP_054888"/>
    </isoform>
    <isoform>
        <id>Q96NJ5-3</id>
        <name>3</name>
        <sequence type="described" ref="VSP_054888 VSP_054889"/>
    </isoform>
</comment>
<gene>
    <name type="primary">KLHL32</name>
    <name type="synonym">BKLHD5</name>
    <name type="synonym">KIAA1900</name>
</gene>
<accession>Q96NJ5</accession>
<accession>B7Z346</accession>
<accession>B7Z4E2</accession>
<accession>E1P528</accession>
<accession>Q5THT0</accession>
<accession>Q96PY7</accession>
<protein>
    <recommendedName>
        <fullName>Kelch-like protein 32</fullName>
    </recommendedName>
    <alternativeName>
        <fullName>BTB and kelch domain-containing protein 5</fullName>
    </alternativeName>
</protein>
<sequence>MPSERCLSIQEMLTGQRLCHSESHNDSVLAALNQQRSDGILCDITLIAEEQKFHAHKAVLAACSDYFRAMFSLCMVESGADEVNLHGVTSLGLKQALEFAYTGQILLEPGVIQDVLAAGSHLQLLELLNLCSHYLIQELNSFNYLDLYRLADLFNLTLLEKAVIDFLVKHLSELLKSRPEEVLTLPYCLLQEVLKSDRLTSLSEEQIWQLAVRWLEHNCHYQYMDELLQYIRFGLMDVDTLHTVALSHPLVQASETATALVNEALEYHQSIYAQPVWQTRRTKPRFQSDTLYIIGGKKREVCKVKELRYFNPVDQENALIAAIANWSELAPMPVGRSHHCVAVMGDFLFVAGGEVEHASGRTCAVRTACRYDPRSNSWAEIAPMKNCREHFVLGAMEEYLYAVGGRNELRQVLPTVERYCPKKNKWTFVQSFDRSLSCHAGYVADGLLWISGGVTNTAQYQNRLMVYEPNQNKWISRSPMLQRRVYHSMAAVQRKLYVLGGNDLDYNNDRILVRHIDSYNIDTDQWTRCNFNLLTGQNESGVAVHNGRIYLVGGYSIWTNEPLACIQVLDVSREGKEEVFYGPTLPFASNGIAACFLPAPYFTCPNLQTLQVPHHRIGTI</sequence>
<name>KLH32_HUMAN</name>
<feature type="chain" id="PRO_0000119083" description="Kelch-like protein 32">
    <location>
        <begin position="1"/>
        <end position="620"/>
    </location>
</feature>
<feature type="domain" description="BTB" evidence="1">
    <location>
        <begin position="42"/>
        <end position="109"/>
    </location>
</feature>
<feature type="repeat" description="Kelch 1">
    <location>
        <begin position="290"/>
        <end position="346"/>
    </location>
</feature>
<feature type="repeat" description="Kelch 2">
    <location>
        <begin position="347"/>
        <end position="398"/>
    </location>
</feature>
<feature type="repeat" description="Kelch 3">
    <location>
        <begin position="399"/>
        <end position="446"/>
    </location>
</feature>
<feature type="repeat" description="Kelch 4">
    <location>
        <begin position="447"/>
        <end position="494"/>
    </location>
</feature>
<feature type="repeat" description="Kelch 5">
    <location>
        <begin position="496"/>
        <end position="547"/>
    </location>
</feature>
<feature type="repeat" description="Kelch 6">
    <location>
        <begin position="549"/>
        <end position="599"/>
    </location>
</feature>
<feature type="splice variant" id="VSP_054888" description="In isoform 2 and isoform 3." evidence="2">
    <location>
        <begin position="69"/>
        <end position="104"/>
    </location>
</feature>
<feature type="splice variant" id="VSP_054889" description="In isoform 3." evidence="2">
    <location>
        <begin position="105"/>
        <end position="137"/>
    </location>
</feature>
<feature type="sequence variant" id="VAR_050053" description="In dbSNP:rs35143662.">
    <original>R</original>
    <variation>C</variation>
    <location>
        <position position="5"/>
    </location>
</feature>
<feature type="sequence variant" id="VAR_028279" description="In dbSNP:rs2294763.">
    <original>N</original>
    <variation>S</variation>
    <location>
        <position position="129"/>
    </location>
</feature>
<feature type="sequence variant" id="VAR_028280" description="In dbSNP:rs12662753.">
    <original>D</original>
    <variation>G</variation>
    <location>
        <position position="146"/>
    </location>
</feature>
<feature type="sequence conflict" description="In Ref. 1; BAB70899." evidence="3" ref="1">
    <original>P</original>
    <variation>S</variation>
    <location>
        <position position="331"/>
    </location>
</feature>
<reference key="1">
    <citation type="journal article" date="2004" name="Nat. Genet.">
        <title>Complete sequencing and characterization of 21,243 full-length human cDNAs.</title>
        <authorList>
            <person name="Ota T."/>
            <person name="Suzuki Y."/>
            <person name="Nishikawa T."/>
            <person name="Otsuki T."/>
            <person name="Sugiyama T."/>
            <person name="Irie R."/>
            <person name="Wakamatsu A."/>
            <person name="Hayashi K."/>
            <person name="Sato H."/>
            <person name="Nagai K."/>
            <person name="Kimura K."/>
            <person name="Makita H."/>
            <person name="Sekine M."/>
            <person name="Obayashi M."/>
            <person name="Nishi T."/>
            <person name="Shibahara T."/>
            <person name="Tanaka T."/>
            <person name="Ishii S."/>
            <person name="Yamamoto J."/>
            <person name="Saito K."/>
            <person name="Kawai Y."/>
            <person name="Isono Y."/>
            <person name="Nakamura Y."/>
            <person name="Nagahari K."/>
            <person name="Murakami K."/>
            <person name="Yasuda T."/>
            <person name="Iwayanagi T."/>
            <person name="Wagatsuma M."/>
            <person name="Shiratori A."/>
            <person name="Sudo H."/>
            <person name="Hosoiri T."/>
            <person name="Kaku Y."/>
            <person name="Kodaira H."/>
            <person name="Kondo H."/>
            <person name="Sugawara M."/>
            <person name="Takahashi M."/>
            <person name="Kanda K."/>
            <person name="Yokoi T."/>
            <person name="Furuya T."/>
            <person name="Kikkawa E."/>
            <person name="Omura Y."/>
            <person name="Abe K."/>
            <person name="Kamihara K."/>
            <person name="Katsuta N."/>
            <person name="Sato K."/>
            <person name="Tanikawa M."/>
            <person name="Yamazaki M."/>
            <person name="Ninomiya K."/>
            <person name="Ishibashi T."/>
            <person name="Yamashita H."/>
            <person name="Murakawa K."/>
            <person name="Fujimori K."/>
            <person name="Tanai H."/>
            <person name="Kimata M."/>
            <person name="Watanabe M."/>
            <person name="Hiraoka S."/>
            <person name="Chiba Y."/>
            <person name="Ishida S."/>
            <person name="Ono Y."/>
            <person name="Takiguchi S."/>
            <person name="Watanabe S."/>
            <person name="Yosida M."/>
            <person name="Hotuta T."/>
            <person name="Kusano J."/>
            <person name="Kanehori K."/>
            <person name="Takahashi-Fujii A."/>
            <person name="Hara H."/>
            <person name="Tanase T.-O."/>
            <person name="Nomura Y."/>
            <person name="Togiya S."/>
            <person name="Komai F."/>
            <person name="Hara R."/>
            <person name="Takeuchi K."/>
            <person name="Arita M."/>
            <person name="Imose N."/>
            <person name="Musashino K."/>
            <person name="Yuuki H."/>
            <person name="Oshima A."/>
            <person name="Sasaki N."/>
            <person name="Aotsuka S."/>
            <person name="Yoshikawa Y."/>
            <person name="Matsunawa H."/>
            <person name="Ichihara T."/>
            <person name="Shiohata N."/>
            <person name="Sano S."/>
            <person name="Moriya S."/>
            <person name="Momiyama H."/>
            <person name="Satoh N."/>
            <person name="Takami S."/>
            <person name="Terashima Y."/>
            <person name="Suzuki O."/>
            <person name="Nakagawa S."/>
            <person name="Senoh A."/>
            <person name="Mizoguchi H."/>
            <person name="Goto Y."/>
            <person name="Shimizu F."/>
            <person name="Wakebe H."/>
            <person name="Hishigaki H."/>
            <person name="Watanabe T."/>
            <person name="Sugiyama A."/>
            <person name="Takemoto M."/>
            <person name="Kawakami B."/>
            <person name="Yamazaki M."/>
            <person name="Watanabe K."/>
            <person name="Kumagai A."/>
            <person name="Itakura S."/>
            <person name="Fukuzumi Y."/>
            <person name="Fujimori Y."/>
            <person name="Komiyama M."/>
            <person name="Tashiro H."/>
            <person name="Tanigami A."/>
            <person name="Fujiwara T."/>
            <person name="Ono T."/>
            <person name="Yamada K."/>
            <person name="Fujii Y."/>
            <person name="Ozaki K."/>
            <person name="Hirao M."/>
            <person name="Ohmori Y."/>
            <person name="Kawabata A."/>
            <person name="Hikiji T."/>
            <person name="Kobatake N."/>
            <person name="Inagaki H."/>
            <person name="Ikema Y."/>
            <person name="Okamoto S."/>
            <person name="Okitani R."/>
            <person name="Kawakami T."/>
            <person name="Noguchi S."/>
            <person name="Itoh T."/>
            <person name="Shigeta K."/>
            <person name="Senba T."/>
            <person name="Matsumura K."/>
            <person name="Nakajima Y."/>
            <person name="Mizuno T."/>
            <person name="Morinaga M."/>
            <person name="Sasaki M."/>
            <person name="Togashi T."/>
            <person name="Oyama M."/>
            <person name="Hata H."/>
            <person name="Watanabe M."/>
            <person name="Komatsu T."/>
            <person name="Mizushima-Sugano J."/>
            <person name="Satoh T."/>
            <person name="Shirai Y."/>
            <person name="Takahashi Y."/>
            <person name="Nakagawa K."/>
            <person name="Okumura K."/>
            <person name="Nagase T."/>
            <person name="Nomura N."/>
            <person name="Kikuchi H."/>
            <person name="Masuho Y."/>
            <person name="Yamashita R."/>
            <person name="Nakai K."/>
            <person name="Yada T."/>
            <person name="Nakamura Y."/>
            <person name="Ohara O."/>
            <person name="Isogai T."/>
            <person name="Sugano S."/>
        </authorList>
    </citation>
    <scope>NUCLEOTIDE SEQUENCE [LARGE SCALE MRNA] (ISOFORMS 1; 2 AND 3)</scope>
    <source>
        <tissue>Brain</tissue>
        <tissue>Hippocampus</tissue>
    </source>
</reference>
<reference key="2">
    <citation type="journal article" date="2003" name="Nature">
        <title>The DNA sequence and analysis of human chromosome 6.</title>
        <authorList>
            <person name="Mungall A.J."/>
            <person name="Palmer S.A."/>
            <person name="Sims S.K."/>
            <person name="Edwards C.A."/>
            <person name="Ashurst J.L."/>
            <person name="Wilming L."/>
            <person name="Jones M.C."/>
            <person name="Horton R."/>
            <person name="Hunt S.E."/>
            <person name="Scott C.E."/>
            <person name="Gilbert J.G.R."/>
            <person name="Clamp M.E."/>
            <person name="Bethel G."/>
            <person name="Milne S."/>
            <person name="Ainscough R."/>
            <person name="Almeida J.P."/>
            <person name="Ambrose K.D."/>
            <person name="Andrews T.D."/>
            <person name="Ashwell R.I.S."/>
            <person name="Babbage A.K."/>
            <person name="Bagguley C.L."/>
            <person name="Bailey J."/>
            <person name="Banerjee R."/>
            <person name="Barker D.J."/>
            <person name="Barlow K.F."/>
            <person name="Bates K."/>
            <person name="Beare D.M."/>
            <person name="Beasley H."/>
            <person name="Beasley O."/>
            <person name="Bird C.P."/>
            <person name="Blakey S.E."/>
            <person name="Bray-Allen S."/>
            <person name="Brook J."/>
            <person name="Brown A.J."/>
            <person name="Brown J.Y."/>
            <person name="Burford D.C."/>
            <person name="Burrill W."/>
            <person name="Burton J."/>
            <person name="Carder C."/>
            <person name="Carter N.P."/>
            <person name="Chapman J.C."/>
            <person name="Clark S.Y."/>
            <person name="Clark G."/>
            <person name="Clee C.M."/>
            <person name="Clegg S."/>
            <person name="Cobley V."/>
            <person name="Collier R.E."/>
            <person name="Collins J.E."/>
            <person name="Colman L.K."/>
            <person name="Corby N.R."/>
            <person name="Coville G.J."/>
            <person name="Culley K.M."/>
            <person name="Dhami P."/>
            <person name="Davies J."/>
            <person name="Dunn M."/>
            <person name="Earthrowl M.E."/>
            <person name="Ellington A.E."/>
            <person name="Evans K.A."/>
            <person name="Faulkner L."/>
            <person name="Francis M.D."/>
            <person name="Frankish A."/>
            <person name="Frankland J."/>
            <person name="French L."/>
            <person name="Garner P."/>
            <person name="Garnett J."/>
            <person name="Ghori M.J."/>
            <person name="Gilby L.M."/>
            <person name="Gillson C.J."/>
            <person name="Glithero R.J."/>
            <person name="Grafham D.V."/>
            <person name="Grant M."/>
            <person name="Gribble S."/>
            <person name="Griffiths C."/>
            <person name="Griffiths M.N.D."/>
            <person name="Hall R."/>
            <person name="Halls K.S."/>
            <person name="Hammond S."/>
            <person name="Harley J.L."/>
            <person name="Hart E.A."/>
            <person name="Heath P.D."/>
            <person name="Heathcott R."/>
            <person name="Holmes S.J."/>
            <person name="Howden P.J."/>
            <person name="Howe K.L."/>
            <person name="Howell G.R."/>
            <person name="Huckle E."/>
            <person name="Humphray S.J."/>
            <person name="Humphries M.D."/>
            <person name="Hunt A.R."/>
            <person name="Johnson C.M."/>
            <person name="Joy A.A."/>
            <person name="Kay M."/>
            <person name="Keenan S.J."/>
            <person name="Kimberley A.M."/>
            <person name="King A."/>
            <person name="Laird G.K."/>
            <person name="Langford C."/>
            <person name="Lawlor S."/>
            <person name="Leongamornlert D.A."/>
            <person name="Leversha M."/>
            <person name="Lloyd C.R."/>
            <person name="Lloyd D.M."/>
            <person name="Loveland J.E."/>
            <person name="Lovell J."/>
            <person name="Martin S."/>
            <person name="Mashreghi-Mohammadi M."/>
            <person name="Maslen G.L."/>
            <person name="Matthews L."/>
            <person name="McCann O.T."/>
            <person name="McLaren S.J."/>
            <person name="McLay K."/>
            <person name="McMurray A."/>
            <person name="Moore M.J.F."/>
            <person name="Mullikin J.C."/>
            <person name="Niblett D."/>
            <person name="Nickerson T."/>
            <person name="Novik K.L."/>
            <person name="Oliver K."/>
            <person name="Overton-Larty E.K."/>
            <person name="Parker A."/>
            <person name="Patel R."/>
            <person name="Pearce A.V."/>
            <person name="Peck A.I."/>
            <person name="Phillimore B.J.C.T."/>
            <person name="Phillips S."/>
            <person name="Plumb R.W."/>
            <person name="Porter K.M."/>
            <person name="Ramsey Y."/>
            <person name="Ranby S.A."/>
            <person name="Rice C.M."/>
            <person name="Ross M.T."/>
            <person name="Searle S.M."/>
            <person name="Sehra H.K."/>
            <person name="Sheridan E."/>
            <person name="Skuce C.D."/>
            <person name="Smith S."/>
            <person name="Smith M."/>
            <person name="Spraggon L."/>
            <person name="Squares S.L."/>
            <person name="Steward C.A."/>
            <person name="Sycamore N."/>
            <person name="Tamlyn-Hall G."/>
            <person name="Tester J."/>
            <person name="Theaker A.J."/>
            <person name="Thomas D.W."/>
            <person name="Thorpe A."/>
            <person name="Tracey A."/>
            <person name="Tromans A."/>
            <person name="Tubby B."/>
            <person name="Wall M."/>
            <person name="Wallis J.M."/>
            <person name="West A.P."/>
            <person name="White S.S."/>
            <person name="Whitehead S.L."/>
            <person name="Whittaker H."/>
            <person name="Wild A."/>
            <person name="Willey D.J."/>
            <person name="Wilmer T.E."/>
            <person name="Wood J.M."/>
            <person name="Wray P.W."/>
            <person name="Wyatt J.C."/>
            <person name="Young L."/>
            <person name="Younger R.M."/>
            <person name="Bentley D.R."/>
            <person name="Coulson A."/>
            <person name="Durbin R.M."/>
            <person name="Hubbard T."/>
            <person name="Sulston J.E."/>
            <person name="Dunham I."/>
            <person name="Rogers J."/>
            <person name="Beck S."/>
        </authorList>
    </citation>
    <scope>NUCLEOTIDE SEQUENCE [LARGE SCALE GENOMIC DNA]</scope>
</reference>
<reference key="3">
    <citation type="submission" date="2005-09" db="EMBL/GenBank/DDBJ databases">
        <authorList>
            <person name="Mural R.J."/>
            <person name="Istrail S."/>
            <person name="Sutton G.G."/>
            <person name="Florea L."/>
            <person name="Halpern A.L."/>
            <person name="Mobarry C.M."/>
            <person name="Lippert R."/>
            <person name="Walenz B."/>
            <person name="Shatkay H."/>
            <person name="Dew I."/>
            <person name="Miller J.R."/>
            <person name="Flanigan M.J."/>
            <person name="Edwards N.J."/>
            <person name="Bolanos R."/>
            <person name="Fasulo D."/>
            <person name="Halldorsson B.V."/>
            <person name="Hannenhalli S."/>
            <person name="Turner R."/>
            <person name="Yooseph S."/>
            <person name="Lu F."/>
            <person name="Nusskern D.R."/>
            <person name="Shue B.C."/>
            <person name="Zheng X.H."/>
            <person name="Zhong F."/>
            <person name="Delcher A.L."/>
            <person name="Huson D.H."/>
            <person name="Kravitz S.A."/>
            <person name="Mouchard L."/>
            <person name="Reinert K."/>
            <person name="Remington K.A."/>
            <person name="Clark A.G."/>
            <person name="Waterman M.S."/>
            <person name="Eichler E.E."/>
            <person name="Adams M.D."/>
            <person name="Hunkapiller M.W."/>
            <person name="Myers E.W."/>
            <person name="Venter J.C."/>
        </authorList>
    </citation>
    <scope>NUCLEOTIDE SEQUENCE [LARGE SCALE GENOMIC DNA]</scope>
</reference>
<reference key="4">
    <citation type="journal article" date="2001" name="DNA Res.">
        <title>Prediction of the coding sequences of unidentified human genes. XXI. The complete sequences of 60 new cDNA clones from brain which code for large proteins.</title>
        <authorList>
            <person name="Nagase T."/>
            <person name="Kikuno R."/>
            <person name="Ohara O."/>
        </authorList>
    </citation>
    <scope>NUCLEOTIDE SEQUENCE [LARGE SCALE MRNA] OF 39-620 (ISOFORM 1)</scope>
    <source>
        <tissue>Brain</tissue>
    </source>
</reference>
<organism>
    <name type="scientific">Homo sapiens</name>
    <name type="common">Human</name>
    <dbReference type="NCBI Taxonomy" id="9606"/>
    <lineage>
        <taxon>Eukaryota</taxon>
        <taxon>Metazoa</taxon>
        <taxon>Chordata</taxon>
        <taxon>Craniata</taxon>
        <taxon>Vertebrata</taxon>
        <taxon>Euteleostomi</taxon>
        <taxon>Mammalia</taxon>
        <taxon>Eutheria</taxon>
        <taxon>Euarchontoglires</taxon>
        <taxon>Primates</taxon>
        <taxon>Haplorrhini</taxon>
        <taxon>Catarrhini</taxon>
        <taxon>Hominidae</taxon>
        <taxon>Homo</taxon>
    </lineage>
</organism>
<dbReference type="EMBL" id="AK055292">
    <property type="protein sequence ID" value="BAB70899.1"/>
    <property type="molecule type" value="mRNA"/>
</dbReference>
<dbReference type="EMBL" id="AK295479">
    <property type="protein sequence ID" value="BAH12082.1"/>
    <property type="molecule type" value="mRNA"/>
</dbReference>
<dbReference type="EMBL" id="AK297240">
    <property type="protein sequence ID" value="BAH12528.1"/>
    <property type="molecule type" value="mRNA"/>
</dbReference>
<dbReference type="EMBL" id="AL033375">
    <property type="status" value="NOT_ANNOTATED_CDS"/>
    <property type="molecule type" value="Genomic_DNA"/>
</dbReference>
<dbReference type="EMBL" id="AL023656">
    <property type="status" value="NOT_ANNOTATED_CDS"/>
    <property type="molecule type" value="Genomic_DNA"/>
</dbReference>
<dbReference type="EMBL" id="AL356958">
    <property type="status" value="NOT_ANNOTATED_CDS"/>
    <property type="molecule type" value="Genomic_DNA"/>
</dbReference>
<dbReference type="EMBL" id="CH471051">
    <property type="protein sequence ID" value="EAW48499.1"/>
    <property type="molecule type" value="Genomic_DNA"/>
</dbReference>
<dbReference type="EMBL" id="CH471051">
    <property type="protein sequence ID" value="EAW48500.1"/>
    <property type="molecule type" value="Genomic_DNA"/>
</dbReference>
<dbReference type="EMBL" id="AB067487">
    <property type="protein sequence ID" value="BAB67793.1"/>
    <property type="molecule type" value="mRNA"/>
</dbReference>
<dbReference type="CCDS" id="CCDS5038.1">
    <molecule id="Q96NJ5-1"/>
</dbReference>
<dbReference type="CCDS" id="CCDS69154.1">
    <molecule id="Q96NJ5-2"/>
</dbReference>
<dbReference type="CCDS" id="CCDS69155.1">
    <molecule id="Q96NJ5-3"/>
</dbReference>
<dbReference type="RefSeq" id="NP_001273179.1">
    <molecule id="Q96NJ5-2"/>
    <property type="nucleotide sequence ID" value="NM_001286250.2"/>
</dbReference>
<dbReference type="RefSeq" id="NP_001273180.1">
    <molecule id="Q96NJ5-3"/>
    <property type="nucleotide sequence ID" value="NM_001286251.2"/>
</dbReference>
<dbReference type="RefSeq" id="NP_001273183.1">
    <property type="nucleotide sequence ID" value="NM_001286254.2"/>
</dbReference>
<dbReference type="RefSeq" id="NP_001310181.1">
    <molecule id="Q96NJ5-1"/>
    <property type="nucleotide sequence ID" value="NM_001323252.2"/>
</dbReference>
<dbReference type="RefSeq" id="NP_001310182.1">
    <property type="nucleotide sequence ID" value="NM_001323253.1"/>
</dbReference>
<dbReference type="RefSeq" id="NP_001310183.1">
    <property type="nucleotide sequence ID" value="NM_001323254.1"/>
</dbReference>
<dbReference type="RefSeq" id="NP_001310184.1">
    <property type="nucleotide sequence ID" value="NM_001323255.1"/>
</dbReference>
<dbReference type="RefSeq" id="NP_001310185.1">
    <property type="nucleotide sequence ID" value="NM_001323256.1"/>
</dbReference>
<dbReference type="RefSeq" id="NP_001310186.1">
    <property type="nucleotide sequence ID" value="NM_001323257.1"/>
</dbReference>
<dbReference type="RefSeq" id="NP_001310188.1">
    <property type="nucleotide sequence ID" value="NM_001323259.1"/>
</dbReference>
<dbReference type="RefSeq" id="NP_001310189.1">
    <property type="nucleotide sequence ID" value="NM_001323260.1"/>
</dbReference>
<dbReference type="RefSeq" id="NP_001310190.1">
    <property type="nucleotide sequence ID" value="NM_001323261.1"/>
</dbReference>
<dbReference type="RefSeq" id="NP_001310191.1">
    <property type="nucleotide sequence ID" value="NM_001323262.1"/>
</dbReference>
<dbReference type="RefSeq" id="NP_001310192.1">
    <property type="nucleotide sequence ID" value="NM_001323263.1"/>
</dbReference>
<dbReference type="RefSeq" id="NP_001310193.1">
    <property type="nucleotide sequence ID" value="NM_001323264.1"/>
</dbReference>
<dbReference type="RefSeq" id="NP_443136.2">
    <molecule id="Q96NJ5-1"/>
    <property type="nucleotide sequence ID" value="NM_052904.4"/>
</dbReference>
<dbReference type="SMR" id="Q96NJ5"/>
<dbReference type="BioGRID" id="125354">
    <property type="interactions" value="13"/>
</dbReference>
<dbReference type="ComplexPortal" id="CPX-8201">
    <property type="entry name" value="CRL3 E3 ubiquitin ligase complex, KLHL32 variant"/>
</dbReference>
<dbReference type="FunCoup" id="Q96NJ5">
    <property type="interactions" value="190"/>
</dbReference>
<dbReference type="IntAct" id="Q96NJ5">
    <property type="interactions" value="6"/>
</dbReference>
<dbReference type="STRING" id="9606.ENSP00000358265"/>
<dbReference type="iPTMnet" id="Q96NJ5"/>
<dbReference type="PhosphoSitePlus" id="Q96NJ5"/>
<dbReference type="BioMuta" id="KLHL32"/>
<dbReference type="DMDM" id="116241269"/>
<dbReference type="jPOST" id="Q96NJ5"/>
<dbReference type="MassIVE" id="Q96NJ5"/>
<dbReference type="PaxDb" id="9606-ENSP00000358265"/>
<dbReference type="PeptideAtlas" id="Q96NJ5"/>
<dbReference type="Antibodypedia" id="31963">
    <property type="antibodies" value="85 antibodies from 21 providers"/>
</dbReference>
<dbReference type="DNASU" id="114792"/>
<dbReference type="Ensembl" id="ENST00000369261.9">
    <molecule id="Q96NJ5-1"/>
    <property type="protein sequence ID" value="ENSP00000358265.4"/>
    <property type="gene ID" value="ENSG00000186231.17"/>
</dbReference>
<dbReference type="Ensembl" id="ENST00000536676.5">
    <molecule id="Q96NJ5-2"/>
    <property type="protein sequence ID" value="ENSP00000440382.1"/>
    <property type="gene ID" value="ENSG00000186231.17"/>
</dbReference>
<dbReference type="Ensembl" id="ENST00000539200.5">
    <molecule id="Q96NJ5-3"/>
    <property type="protein sequence ID" value="ENSP00000441527.1"/>
    <property type="gene ID" value="ENSG00000186231.17"/>
</dbReference>
<dbReference type="GeneID" id="114792"/>
<dbReference type="KEGG" id="hsa:114792"/>
<dbReference type="MANE-Select" id="ENST00000369261.9">
    <property type="protein sequence ID" value="ENSP00000358265.4"/>
    <property type="RefSeq nucleotide sequence ID" value="NM_052904.4"/>
    <property type="RefSeq protein sequence ID" value="NP_443136.2"/>
</dbReference>
<dbReference type="UCSC" id="uc010kcm.2">
    <molecule id="Q96NJ5-1"/>
    <property type="organism name" value="human"/>
</dbReference>
<dbReference type="AGR" id="HGNC:21221"/>
<dbReference type="CTD" id="114792"/>
<dbReference type="DisGeNET" id="114792"/>
<dbReference type="GeneCards" id="KLHL32"/>
<dbReference type="HGNC" id="HGNC:21221">
    <property type="gene designation" value="KLHL32"/>
</dbReference>
<dbReference type="HPA" id="ENSG00000186231">
    <property type="expression patterns" value="Group enriched (brain, fallopian tube)"/>
</dbReference>
<dbReference type="neXtProt" id="NX_Q96NJ5"/>
<dbReference type="OpenTargets" id="ENSG00000186231"/>
<dbReference type="PharmGKB" id="PA162393552"/>
<dbReference type="VEuPathDB" id="HostDB:ENSG00000186231"/>
<dbReference type="eggNOG" id="KOG1072">
    <property type="taxonomic scope" value="Eukaryota"/>
</dbReference>
<dbReference type="GeneTree" id="ENSGT00940000157179"/>
<dbReference type="HOGENOM" id="CLU_004253_14_3_1"/>
<dbReference type="InParanoid" id="Q96NJ5"/>
<dbReference type="OMA" id="WTFVQPF"/>
<dbReference type="OrthoDB" id="45365at2759"/>
<dbReference type="PAN-GO" id="Q96NJ5">
    <property type="GO annotations" value="0 GO annotations based on evolutionary models"/>
</dbReference>
<dbReference type="PhylomeDB" id="Q96NJ5"/>
<dbReference type="TreeFam" id="TF328485"/>
<dbReference type="PathwayCommons" id="Q96NJ5"/>
<dbReference type="SignaLink" id="Q96NJ5"/>
<dbReference type="BioGRID-ORCS" id="114792">
    <property type="hits" value="9 hits in 1181 CRISPR screens"/>
</dbReference>
<dbReference type="ChiTaRS" id="KLHL32">
    <property type="organism name" value="human"/>
</dbReference>
<dbReference type="GenomeRNAi" id="114792"/>
<dbReference type="Pharos" id="Q96NJ5">
    <property type="development level" value="Tdark"/>
</dbReference>
<dbReference type="PRO" id="PR:Q96NJ5"/>
<dbReference type="Proteomes" id="UP000005640">
    <property type="component" value="Chromosome 6"/>
</dbReference>
<dbReference type="RNAct" id="Q96NJ5">
    <property type="molecule type" value="protein"/>
</dbReference>
<dbReference type="Bgee" id="ENSG00000186231">
    <property type="expression patterns" value="Expressed in cortical plate and 118 other cell types or tissues"/>
</dbReference>
<dbReference type="ExpressionAtlas" id="Q96NJ5">
    <property type="expression patterns" value="baseline and differential"/>
</dbReference>
<dbReference type="CDD" id="cd18471">
    <property type="entry name" value="BACK_KLHL32_BKLHD5"/>
    <property type="match status" value="1"/>
</dbReference>
<dbReference type="CDD" id="cd18261">
    <property type="entry name" value="BTB_POZ_KLHL32"/>
    <property type="match status" value="1"/>
</dbReference>
<dbReference type="Gene3D" id="1.25.40.420">
    <property type="match status" value="1"/>
</dbReference>
<dbReference type="Gene3D" id="2.120.10.80">
    <property type="entry name" value="Kelch-type beta propeller"/>
    <property type="match status" value="1"/>
</dbReference>
<dbReference type="Gene3D" id="3.30.710.10">
    <property type="entry name" value="Potassium Channel Kv1.1, Chain A"/>
    <property type="match status" value="1"/>
</dbReference>
<dbReference type="InterPro" id="IPR011705">
    <property type="entry name" value="BACK"/>
</dbReference>
<dbReference type="InterPro" id="IPR056737">
    <property type="entry name" value="Beta-prop_ATRN-MKLN-like"/>
</dbReference>
<dbReference type="InterPro" id="IPR017096">
    <property type="entry name" value="BTB-kelch_protein"/>
</dbReference>
<dbReference type="InterPro" id="IPR000210">
    <property type="entry name" value="BTB/POZ_dom"/>
</dbReference>
<dbReference type="InterPro" id="IPR030570">
    <property type="entry name" value="BTB_POZ_KLHL32"/>
</dbReference>
<dbReference type="InterPro" id="IPR015915">
    <property type="entry name" value="Kelch-typ_b-propeller"/>
</dbReference>
<dbReference type="InterPro" id="IPR006652">
    <property type="entry name" value="Kelch_1"/>
</dbReference>
<dbReference type="InterPro" id="IPR047028">
    <property type="entry name" value="KLHL32_BACK"/>
</dbReference>
<dbReference type="InterPro" id="IPR011333">
    <property type="entry name" value="SKP1/BTB/POZ_sf"/>
</dbReference>
<dbReference type="PANTHER" id="PTHR45632:SF3">
    <property type="entry name" value="KELCH-LIKE PROTEIN 32"/>
    <property type="match status" value="1"/>
</dbReference>
<dbReference type="PANTHER" id="PTHR45632">
    <property type="entry name" value="LD33804P"/>
    <property type="match status" value="1"/>
</dbReference>
<dbReference type="Pfam" id="PF07707">
    <property type="entry name" value="BACK"/>
    <property type="match status" value="1"/>
</dbReference>
<dbReference type="Pfam" id="PF24981">
    <property type="entry name" value="Beta-prop_ATRN-LZTR1"/>
    <property type="match status" value="1"/>
</dbReference>
<dbReference type="Pfam" id="PF00651">
    <property type="entry name" value="BTB"/>
    <property type="match status" value="1"/>
</dbReference>
<dbReference type="PIRSF" id="PIRSF037037">
    <property type="entry name" value="Kelch-like_protein_gigaxonin"/>
    <property type="match status" value="1"/>
</dbReference>
<dbReference type="SMART" id="SM00875">
    <property type="entry name" value="BACK"/>
    <property type="match status" value="1"/>
</dbReference>
<dbReference type="SMART" id="SM00225">
    <property type="entry name" value="BTB"/>
    <property type="match status" value="1"/>
</dbReference>
<dbReference type="SMART" id="SM00612">
    <property type="entry name" value="Kelch"/>
    <property type="match status" value="5"/>
</dbReference>
<dbReference type="SUPFAM" id="SSF117281">
    <property type="entry name" value="Kelch motif"/>
    <property type="match status" value="1"/>
</dbReference>
<dbReference type="SUPFAM" id="SSF54695">
    <property type="entry name" value="POZ domain"/>
    <property type="match status" value="1"/>
</dbReference>
<dbReference type="PROSITE" id="PS50097">
    <property type="entry name" value="BTB"/>
    <property type="match status" value="1"/>
</dbReference>